<comment type="function">
    <text>Probably part of a high-affinity binding-protein-dependent transport system for nitrate. Probably responsible for energy coupling to the transport system.</text>
</comment>
<comment type="subcellular location">
    <subcellularLocation>
        <location evidence="2">Cell membrane</location>
        <topology evidence="2">Peripheral membrane protein</topology>
    </subcellularLocation>
</comment>
<comment type="similarity">
    <text evidence="2">Belongs to the ABC transporter superfamily.</text>
</comment>
<gene>
    <name type="primary">nasD</name>
</gene>
<sequence>MKPLIQVQGVSQRFSTASGEFLALQNVSFDIYEGETISLIGHSGCGKSTLLNLIAGIALPTEGGLLCDNREIAGPGPERAVVFQNHSLLPWLTCFDNVALAVDQVFRRSMSKGERKEWIEHNLERVQMGHALHKRPGEISGGMKQRVGIARALAMKPKVLLLDEPFGALDALTRAHLQDAVMQIQQSLNTTIVMITHDVDEAVLLSDRVLMMTNGPAATVGEILDVNLPRPRNRVQLADDSRYHHLRQQILHFLYEKQPKAA</sequence>
<keyword id="KW-0067">ATP-binding</keyword>
<keyword id="KW-1003">Cell membrane</keyword>
<keyword id="KW-0472">Membrane</keyword>
<keyword id="KW-0534">Nitrate assimilation</keyword>
<keyword id="KW-0547">Nucleotide-binding</keyword>
<keyword id="KW-0813">Transport</keyword>
<proteinExistence type="inferred from homology"/>
<organism>
    <name type="scientific">Klebsiella oxytoca</name>
    <dbReference type="NCBI Taxonomy" id="571"/>
    <lineage>
        <taxon>Bacteria</taxon>
        <taxon>Pseudomonadati</taxon>
        <taxon>Pseudomonadota</taxon>
        <taxon>Gammaproteobacteria</taxon>
        <taxon>Enterobacterales</taxon>
        <taxon>Enterobacteriaceae</taxon>
        <taxon>Klebsiella/Raoultella group</taxon>
        <taxon>Klebsiella</taxon>
    </lineage>
</organism>
<feature type="chain" id="PRO_0000092615" description="Nitrate transport protein NasD">
    <location>
        <begin position="1"/>
        <end position="262"/>
    </location>
</feature>
<feature type="domain" description="ABC transporter" evidence="1">
    <location>
        <begin position="5"/>
        <end position="239"/>
    </location>
</feature>
<feature type="binding site" evidence="1">
    <location>
        <begin position="41"/>
        <end position="48"/>
    </location>
    <ligand>
        <name>ATP</name>
        <dbReference type="ChEBI" id="CHEBI:30616"/>
    </ligand>
</feature>
<name>NASD_KLEOX</name>
<accession>P39459</accession>
<protein>
    <recommendedName>
        <fullName>Nitrate transport protein NasD</fullName>
    </recommendedName>
</protein>
<reference key="1">
    <citation type="journal article" date="1994" name="J. Bacteriol.">
        <title>The nasFEDCBA operon for nitrate and nitrite assimilation in Klebsiella pneumoniae M5al.</title>
        <authorList>
            <person name="Lin J.T."/>
            <person name="Goldman B.S."/>
            <person name="Stewart V."/>
        </authorList>
    </citation>
    <scope>NUCLEOTIDE SEQUENCE [GENOMIC DNA]</scope>
    <source>
        <strain>M5a1</strain>
    </source>
</reference>
<reference key="2">
    <citation type="submission" date="1997-11" db="EMBL/GenBank/DDBJ databases">
        <authorList>
            <person name="Stewart V."/>
        </authorList>
    </citation>
    <scope>SEQUENCE REVISION</scope>
</reference>
<dbReference type="EMBL" id="L27431">
    <property type="protein sequence ID" value="AAB86901.1"/>
    <property type="molecule type" value="Genomic_DNA"/>
</dbReference>
<dbReference type="SMR" id="P39459"/>
<dbReference type="STRING" id="571.AB185_18730"/>
<dbReference type="eggNOG" id="COG1116">
    <property type="taxonomic scope" value="Bacteria"/>
</dbReference>
<dbReference type="GO" id="GO:0005886">
    <property type="term" value="C:plasma membrane"/>
    <property type="evidence" value="ECO:0007669"/>
    <property type="project" value="UniProtKB-SubCell"/>
</dbReference>
<dbReference type="GO" id="GO:0005524">
    <property type="term" value="F:ATP binding"/>
    <property type="evidence" value="ECO:0007669"/>
    <property type="project" value="UniProtKB-KW"/>
</dbReference>
<dbReference type="GO" id="GO:0016887">
    <property type="term" value="F:ATP hydrolysis activity"/>
    <property type="evidence" value="ECO:0007669"/>
    <property type="project" value="InterPro"/>
</dbReference>
<dbReference type="GO" id="GO:0015112">
    <property type="term" value="F:nitrate transmembrane transporter activity"/>
    <property type="evidence" value="ECO:0007669"/>
    <property type="project" value="InterPro"/>
</dbReference>
<dbReference type="GO" id="GO:0042128">
    <property type="term" value="P:nitrate assimilation"/>
    <property type="evidence" value="ECO:0007669"/>
    <property type="project" value="UniProtKB-KW"/>
</dbReference>
<dbReference type="CDD" id="cd03293">
    <property type="entry name" value="ABC_NrtD_SsuB_transporters"/>
    <property type="match status" value="1"/>
</dbReference>
<dbReference type="Gene3D" id="3.40.50.300">
    <property type="entry name" value="P-loop containing nucleotide triphosphate hydrolases"/>
    <property type="match status" value="1"/>
</dbReference>
<dbReference type="InterPro" id="IPR003593">
    <property type="entry name" value="AAA+_ATPase"/>
</dbReference>
<dbReference type="InterPro" id="IPR003439">
    <property type="entry name" value="ABC_transporter-like_ATP-bd"/>
</dbReference>
<dbReference type="InterPro" id="IPR017871">
    <property type="entry name" value="ABC_transporter-like_CS"/>
</dbReference>
<dbReference type="InterPro" id="IPR050166">
    <property type="entry name" value="ABC_transporter_ATP-bind"/>
</dbReference>
<dbReference type="InterPro" id="IPR005890">
    <property type="entry name" value="NO3_transporter_ATP-bd-like"/>
</dbReference>
<dbReference type="InterPro" id="IPR027417">
    <property type="entry name" value="P-loop_NTPase"/>
</dbReference>
<dbReference type="NCBIfam" id="TIGR01184">
    <property type="entry name" value="ntrCD"/>
    <property type="match status" value="1"/>
</dbReference>
<dbReference type="PANTHER" id="PTHR42788:SF7">
    <property type="entry name" value="NITRATE ABC TRANSPORTER ATP-BINDING PROTEIN"/>
    <property type="match status" value="1"/>
</dbReference>
<dbReference type="PANTHER" id="PTHR42788">
    <property type="entry name" value="TAURINE IMPORT ATP-BINDING PROTEIN-RELATED"/>
    <property type="match status" value="1"/>
</dbReference>
<dbReference type="Pfam" id="PF00005">
    <property type="entry name" value="ABC_tran"/>
    <property type="match status" value="1"/>
</dbReference>
<dbReference type="SMART" id="SM00382">
    <property type="entry name" value="AAA"/>
    <property type="match status" value="1"/>
</dbReference>
<dbReference type="SUPFAM" id="SSF52540">
    <property type="entry name" value="P-loop containing nucleoside triphosphate hydrolases"/>
    <property type="match status" value="1"/>
</dbReference>
<dbReference type="PROSITE" id="PS00211">
    <property type="entry name" value="ABC_TRANSPORTER_1"/>
    <property type="match status" value="1"/>
</dbReference>
<dbReference type="PROSITE" id="PS50893">
    <property type="entry name" value="ABC_TRANSPORTER_2"/>
    <property type="match status" value="1"/>
</dbReference>
<evidence type="ECO:0000255" key="1">
    <source>
        <dbReference type="PROSITE-ProRule" id="PRU00434"/>
    </source>
</evidence>
<evidence type="ECO:0000305" key="2"/>